<feature type="chain" id="PRO_1000001708" description="UPF0758 protein YPN_3801">
    <location>
        <begin position="1"/>
        <end position="222"/>
    </location>
</feature>
<feature type="domain" description="MPN" evidence="2">
    <location>
        <begin position="100"/>
        <end position="222"/>
    </location>
</feature>
<feature type="short sequence motif" description="JAMM motif" evidence="2">
    <location>
        <begin position="171"/>
        <end position="184"/>
    </location>
</feature>
<feature type="binding site" evidence="2">
    <location>
        <position position="171"/>
    </location>
    <ligand>
        <name>Zn(2+)</name>
        <dbReference type="ChEBI" id="CHEBI:29105"/>
        <note>catalytic</note>
    </ligand>
</feature>
<feature type="binding site" evidence="2">
    <location>
        <position position="173"/>
    </location>
    <ligand>
        <name>Zn(2+)</name>
        <dbReference type="ChEBI" id="CHEBI:29105"/>
        <note>catalytic</note>
    </ligand>
</feature>
<feature type="binding site" evidence="2">
    <location>
        <position position="184"/>
    </location>
    <ligand>
        <name>Zn(2+)</name>
        <dbReference type="ChEBI" id="CHEBI:29105"/>
        <note>catalytic</note>
    </ligand>
</feature>
<reference key="1">
    <citation type="journal article" date="2006" name="J. Bacteriol.">
        <title>Complete genome sequence of Yersinia pestis strains Antiqua and Nepal516: evidence of gene reduction in an emerging pathogen.</title>
        <authorList>
            <person name="Chain P.S.G."/>
            <person name="Hu P."/>
            <person name="Malfatti S.A."/>
            <person name="Radnedge L."/>
            <person name="Larimer F."/>
            <person name="Vergez L.M."/>
            <person name="Worsham P."/>
            <person name="Chu M.C."/>
            <person name="Andersen G.L."/>
        </authorList>
    </citation>
    <scope>NUCLEOTIDE SEQUENCE [LARGE SCALE GENOMIC DNA]</scope>
    <source>
        <strain>Nepal516</strain>
    </source>
</reference>
<reference key="2">
    <citation type="submission" date="2009-04" db="EMBL/GenBank/DDBJ databases">
        <title>Yersinia pestis Nepal516A whole genome shotgun sequencing project.</title>
        <authorList>
            <person name="Plunkett G. III"/>
            <person name="Anderson B.D."/>
            <person name="Baumler D.J."/>
            <person name="Burland V."/>
            <person name="Cabot E.L."/>
            <person name="Glasner J.D."/>
            <person name="Mau B."/>
            <person name="Neeno-Eckwall E."/>
            <person name="Perna N.T."/>
            <person name="Munk A.C."/>
            <person name="Tapia R."/>
            <person name="Green L.D."/>
            <person name="Rogers Y.C."/>
            <person name="Detter J.C."/>
            <person name="Bruce D.C."/>
            <person name="Brettin T.S."/>
        </authorList>
    </citation>
    <scope>NUCLEOTIDE SEQUENCE [LARGE SCALE GENOMIC DNA]</scope>
    <source>
        <strain>Nepal516</strain>
    </source>
</reference>
<gene>
    <name type="ordered locus">YPN_3801</name>
    <name type="ORF">YP516_4321</name>
</gene>
<proteinExistence type="inferred from homology"/>
<keyword id="KW-0378">Hydrolase</keyword>
<keyword id="KW-0479">Metal-binding</keyword>
<keyword id="KW-0482">Metalloprotease</keyword>
<keyword id="KW-0645">Protease</keyword>
<keyword id="KW-0862">Zinc</keyword>
<accession>Q1CD02</accession>
<accession>D1Q2G1</accession>
<dbReference type="EMBL" id="CP000305">
    <property type="protein sequence ID" value="ABG20128.1"/>
    <property type="molecule type" value="Genomic_DNA"/>
</dbReference>
<dbReference type="EMBL" id="ACNQ01000019">
    <property type="protein sequence ID" value="EEO74714.1"/>
    <property type="molecule type" value="Genomic_DNA"/>
</dbReference>
<dbReference type="SMR" id="Q1CD02"/>
<dbReference type="KEGG" id="ypn:YPN_3801"/>
<dbReference type="HOGENOM" id="CLU_073529_0_1_6"/>
<dbReference type="Proteomes" id="UP000008936">
    <property type="component" value="Chromosome"/>
</dbReference>
<dbReference type="GO" id="GO:0046872">
    <property type="term" value="F:metal ion binding"/>
    <property type="evidence" value="ECO:0007669"/>
    <property type="project" value="UniProtKB-KW"/>
</dbReference>
<dbReference type="GO" id="GO:0008237">
    <property type="term" value="F:metallopeptidase activity"/>
    <property type="evidence" value="ECO:0007669"/>
    <property type="project" value="UniProtKB-KW"/>
</dbReference>
<dbReference type="GO" id="GO:0006508">
    <property type="term" value="P:proteolysis"/>
    <property type="evidence" value="ECO:0007669"/>
    <property type="project" value="UniProtKB-KW"/>
</dbReference>
<dbReference type="CDD" id="cd08071">
    <property type="entry name" value="MPN_DUF2466"/>
    <property type="match status" value="1"/>
</dbReference>
<dbReference type="Gene3D" id="3.40.140.10">
    <property type="entry name" value="Cytidine Deaminase, domain 2"/>
    <property type="match status" value="1"/>
</dbReference>
<dbReference type="HAMAP" id="MF_00018">
    <property type="entry name" value="UPF0758_YicR"/>
    <property type="match status" value="1"/>
</dbReference>
<dbReference type="InterPro" id="IPR037518">
    <property type="entry name" value="MPN"/>
</dbReference>
<dbReference type="InterPro" id="IPR025657">
    <property type="entry name" value="RadC_JAB"/>
</dbReference>
<dbReference type="InterPro" id="IPR010994">
    <property type="entry name" value="RuvA_2-like"/>
</dbReference>
<dbReference type="InterPro" id="IPR001405">
    <property type="entry name" value="UPF0758"/>
</dbReference>
<dbReference type="InterPro" id="IPR020891">
    <property type="entry name" value="UPF0758_CS"/>
</dbReference>
<dbReference type="InterPro" id="IPR046778">
    <property type="entry name" value="UPF0758_N"/>
</dbReference>
<dbReference type="InterPro" id="IPR022820">
    <property type="entry name" value="UPF0758_YicR"/>
</dbReference>
<dbReference type="NCBIfam" id="NF000642">
    <property type="entry name" value="PRK00024.1"/>
    <property type="match status" value="1"/>
</dbReference>
<dbReference type="NCBIfam" id="TIGR00608">
    <property type="entry name" value="radc"/>
    <property type="match status" value="1"/>
</dbReference>
<dbReference type="PANTHER" id="PTHR30471">
    <property type="entry name" value="DNA REPAIR PROTEIN RADC"/>
    <property type="match status" value="1"/>
</dbReference>
<dbReference type="PANTHER" id="PTHR30471:SF3">
    <property type="entry name" value="UPF0758 PROTEIN YEES-RELATED"/>
    <property type="match status" value="1"/>
</dbReference>
<dbReference type="Pfam" id="PF04002">
    <property type="entry name" value="RadC"/>
    <property type="match status" value="1"/>
</dbReference>
<dbReference type="Pfam" id="PF20582">
    <property type="entry name" value="UPF0758_N"/>
    <property type="match status" value="1"/>
</dbReference>
<dbReference type="SUPFAM" id="SSF47781">
    <property type="entry name" value="RuvA domain 2-like"/>
    <property type="match status" value="1"/>
</dbReference>
<dbReference type="PROSITE" id="PS50249">
    <property type="entry name" value="MPN"/>
    <property type="match status" value="1"/>
</dbReference>
<dbReference type="PROSITE" id="PS01302">
    <property type="entry name" value="UPF0758"/>
    <property type="match status" value="1"/>
</dbReference>
<evidence type="ECO:0000255" key="1">
    <source>
        <dbReference type="HAMAP-Rule" id="MF_00018"/>
    </source>
</evidence>
<evidence type="ECO:0000255" key="2">
    <source>
        <dbReference type="PROSITE-ProRule" id="PRU01182"/>
    </source>
</evidence>
<organism>
    <name type="scientific">Yersinia pestis bv. Antiqua (strain Nepal516)</name>
    <dbReference type="NCBI Taxonomy" id="377628"/>
    <lineage>
        <taxon>Bacteria</taxon>
        <taxon>Pseudomonadati</taxon>
        <taxon>Pseudomonadota</taxon>
        <taxon>Gammaproteobacteria</taxon>
        <taxon>Enterobacterales</taxon>
        <taxon>Yersiniaceae</taxon>
        <taxon>Yersinia</taxon>
    </lineage>
</organism>
<comment type="similarity">
    <text evidence="1">Belongs to the UPF0758 family. YicR subfamily.</text>
</comment>
<name>Y3801_YERPN</name>
<protein>
    <recommendedName>
        <fullName evidence="1">UPF0758 protein YPN_3801</fullName>
    </recommendedName>
</protein>
<sequence>MDEWYGQVAPREKLLKYGAAVLTDAELLAIFLRTGIPGMHVMKMAEYLIETFGSLHGLISADYQTLCAHKGIGASKYSQIQAIGELACRCFSSHLMRESVLLNPGITQKFLQNILSHREREIFLVVFLDNQHRVIRHEEMFTGTISSVEVHPREIVREALKVNAAALILAHNHPSGKAEPSQADRLITTQVIKACSLLDIRVLDHLVVGRGECVSFAERGWL</sequence>